<accession>P25195</accession>
<reference key="1">
    <citation type="journal article" date="1991" name="Mol. Gen. Genet.">
        <title>Six nodulation genes of nod box locus 4 in Rhizobium meliloti are involved in nodulation signal production: nodM codes for D-glucosamine synthetase.</title>
        <authorList>
            <person name="Baev N."/>
            <person name="Endre G."/>
            <person name="Petrovics G."/>
            <person name="Banfalvi Z."/>
            <person name="Kondorosi A."/>
        </authorList>
    </citation>
    <scope>NUCLEOTIDE SEQUENCE [GENOMIC DNA]</scope>
    <source>
        <strain>AK631</strain>
    </source>
</reference>
<protein>
    <recommendedName>
        <fullName>Glutamine--fructose-6-phosphate aminotransferase [isomerizing]</fullName>
        <shortName>GFAT</shortName>
        <ecNumber>2.6.1.16</ecNumber>
    </recommendedName>
    <alternativeName>
        <fullName>Nodulation protein M</fullName>
    </alternativeName>
</protein>
<evidence type="ECO:0000250" key="1"/>
<geneLocation type="plasmid">
    <name>pSymA</name>
    <name>megaplasmid 1</name>
</geneLocation>
<sequence>MCGIVGIVGHQPVSERLVEALEPLEYRGYDSAGVATMDAGTLQRRRAEGKLGNLREKLKEAPLSGTIGIAHTRWATHGAPTERNAHPHFTEGVAVVHNGIIENFAELKDELAAGGAEFQTETDTEVVAHLLAKYRRDGLGRREAMHAMLKRVKGAYALAVLFEDDPSTIMAARTGPLAIGHGNGEMFLGSDAIALAPFTNEITYLIDGDWAVIGKTGVHIFDFDGNVVERPRQISTAAAFLVDKGNHRHFMEKEIYEQPEVIAIALGHYVNVIDKSCRSDSDAIDFAGVESLAISCCGTAYLAGLIGKYWFERYARLPVEIAVASEFRYREIPLSPQSALFISQSGETADTLASLRYCKAHGLRIGAVVNARESTMARESDAVFPILAGPEIGVARTKAFTCQLAVLAALRAGAGKARGTISGDEEQALIKSLAEMPAIMGQVLNSIQPEIEVLSRELSNCRDVLYLGRGTSFPLAMEGALKLKEISYIQPKSYAAGQLKHGPYALIDENMPVIVIAPHDRFFDKTVTNMQEVARGGRIILITDEKGAAASKLDTMHTIVLPEVDEIIAPMIFSLPLQLLAYHTAVFMGTDVDQPRNLAKSVTVE</sequence>
<feature type="initiator methionine" description="Removed" evidence="1">
    <location>
        <position position="1"/>
    </location>
</feature>
<feature type="chain" id="PRO_0000135438" description="Glutamine--fructose-6-phosphate aminotransferase [isomerizing]">
    <location>
        <begin position="2"/>
        <end position="605"/>
    </location>
</feature>
<feature type="domain" description="Glutamine amidotransferase type-2">
    <location>
        <begin position="2"/>
        <end position="216"/>
    </location>
</feature>
<feature type="domain" description="SIS 1">
    <location>
        <begin position="280"/>
        <end position="420"/>
    </location>
</feature>
<feature type="domain" description="SIS 2">
    <location>
        <begin position="454"/>
        <end position="595"/>
    </location>
</feature>
<feature type="active site" description="Nucleophile; for GATase activity" evidence="1">
    <location>
        <position position="2"/>
    </location>
</feature>
<feature type="active site" description="For Fru-6P isomerization activity" evidence="1">
    <location>
        <position position="600"/>
    </location>
</feature>
<proteinExistence type="evidence at transcript level"/>
<gene>
    <name type="primary">nodM</name>
</gene>
<comment type="function">
    <text>Involved in the production of the root hair deformation (HAD) factor specifically on medicago.</text>
</comment>
<comment type="catalytic activity">
    <reaction>
        <text>D-fructose 6-phosphate + L-glutamine = D-glucosamine 6-phosphate + L-glutamate</text>
        <dbReference type="Rhea" id="RHEA:13237"/>
        <dbReference type="ChEBI" id="CHEBI:29985"/>
        <dbReference type="ChEBI" id="CHEBI:58359"/>
        <dbReference type="ChEBI" id="CHEBI:58725"/>
        <dbReference type="ChEBI" id="CHEBI:61527"/>
        <dbReference type="EC" id="2.6.1.16"/>
    </reaction>
</comment>
<comment type="subcellular location">
    <subcellularLocation>
        <location evidence="1">Cytoplasm</location>
    </subcellularLocation>
</comment>
<comment type="induction">
    <text>In response to a plant signal such as luteolin via the regulatory gene NodD.</text>
</comment>
<keyword id="KW-0032">Aminotransferase</keyword>
<keyword id="KW-0963">Cytoplasm</keyword>
<keyword id="KW-0315">Glutamine amidotransferase</keyword>
<keyword id="KW-0536">Nodulation</keyword>
<keyword id="KW-0614">Plasmid</keyword>
<keyword id="KW-0677">Repeat</keyword>
<keyword id="KW-0808">Transferase</keyword>
<organism>
    <name type="scientific">Rhizobium meliloti</name>
    <name type="common">Ensifer meliloti</name>
    <name type="synonym">Sinorhizobium meliloti</name>
    <dbReference type="NCBI Taxonomy" id="382"/>
    <lineage>
        <taxon>Bacteria</taxon>
        <taxon>Pseudomonadati</taxon>
        <taxon>Pseudomonadota</taxon>
        <taxon>Alphaproteobacteria</taxon>
        <taxon>Hyphomicrobiales</taxon>
        <taxon>Rhizobiaceae</taxon>
        <taxon>Sinorhizobium/Ensifer group</taxon>
        <taxon>Sinorhizobium</taxon>
    </lineage>
</organism>
<name>NODM_RHIML</name>
<dbReference type="EC" id="2.6.1.16"/>
<dbReference type="EMBL" id="X58632">
    <property type="protein sequence ID" value="CAA41485.1"/>
    <property type="molecule type" value="Genomic_DNA"/>
</dbReference>
<dbReference type="PIR" id="S16561">
    <property type="entry name" value="S16561"/>
</dbReference>
<dbReference type="SMR" id="P25195"/>
<dbReference type="STRING" id="382.DU99_09045"/>
<dbReference type="GO" id="GO:0005829">
    <property type="term" value="C:cytosol"/>
    <property type="evidence" value="ECO:0007669"/>
    <property type="project" value="TreeGrafter"/>
</dbReference>
<dbReference type="GO" id="GO:0097367">
    <property type="term" value="F:carbohydrate derivative binding"/>
    <property type="evidence" value="ECO:0007669"/>
    <property type="project" value="InterPro"/>
</dbReference>
<dbReference type="GO" id="GO:0004360">
    <property type="term" value="F:glutamine-fructose-6-phosphate transaminase (isomerizing) activity"/>
    <property type="evidence" value="ECO:0007669"/>
    <property type="project" value="UniProtKB-UniRule"/>
</dbReference>
<dbReference type="GO" id="GO:0005975">
    <property type="term" value="P:carbohydrate metabolic process"/>
    <property type="evidence" value="ECO:0007669"/>
    <property type="project" value="UniProtKB-UniRule"/>
</dbReference>
<dbReference type="GO" id="GO:0006002">
    <property type="term" value="P:fructose 6-phosphate metabolic process"/>
    <property type="evidence" value="ECO:0007669"/>
    <property type="project" value="TreeGrafter"/>
</dbReference>
<dbReference type="GO" id="GO:0006487">
    <property type="term" value="P:protein N-linked glycosylation"/>
    <property type="evidence" value="ECO:0007669"/>
    <property type="project" value="TreeGrafter"/>
</dbReference>
<dbReference type="GO" id="GO:0006047">
    <property type="term" value="P:UDP-N-acetylglucosamine metabolic process"/>
    <property type="evidence" value="ECO:0007669"/>
    <property type="project" value="TreeGrafter"/>
</dbReference>
<dbReference type="CDD" id="cd00714">
    <property type="entry name" value="GFAT"/>
    <property type="match status" value="1"/>
</dbReference>
<dbReference type="CDD" id="cd05008">
    <property type="entry name" value="SIS_GlmS_GlmD_1"/>
    <property type="match status" value="1"/>
</dbReference>
<dbReference type="CDD" id="cd05009">
    <property type="entry name" value="SIS_GlmS_GlmD_2"/>
    <property type="match status" value="1"/>
</dbReference>
<dbReference type="FunFam" id="3.40.50.10490:FF:000001">
    <property type="entry name" value="Glutamine--fructose-6-phosphate aminotransferase [isomerizing]"/>
    <property type="match status" value="1"/>
</dbReference>
<dbReference type="FunFam" id="3.40.50.10490:FF:000002">
    <property type="entry name" value="Glutamine--fructose-6-phosphate aminotransferase [isomerizing]"/>
    <property type="match status" value="1"/>
</dbReference>
<dbReference type="FunFam" id="3.60.20.10:FF:000006">
    <property type="entry name" value="Glutamine--fructose-6-phosphate aminotransferase [isomerizing]"/>
    <property type="match status" value="1"/>
</dbReference>
<dbReference type="Gene3D" id="3.40.50.10490">
    <property type="entry name" value="Glucose-6-phosphate isomerase like protein, domain 1"/>
    <property type="match status" value="2"/>
</dbReference>
<dbReference type="Gene3D" id="3.60.20.10">
    <property type="entry name" value="Glutamine Phosphoribosylpyrophosphate, subunit 1, domain 1"/>
    <property type="match status" value="1"/>
</dbReference>
<dbReference type="HAMAP" id="MF_00164">
    <property type="entry name" value="GlmS"/>
    <property type="match status" value="1"/>
</dbReference>
<dbReference type="InterPro" id="IPR017932">
    <property type="entry name" value="GATase_2_dom"/>
</dbReference>
<dbReference type="InterPro" id="IPR005855">
    <property type="entry name" value="GFAT"/>
</dbReference>
<dbReference type="InterPro" id="IPR047084">
    <property type="entry name" value="GFAT_N"/>
</dbReference>
<dbReference type="InterPro" id="IPR035466">
    <property type="entry name" value="GlmS/AgaS_SIS"/>
</dbReference>
<dbReference type="InterPro" id="IPR035490">
    <property type="entry name" value="GlmS/FrlB_SIS"/>
</dbReference>
<dbReference type="InterPro" id="IPR029055">
    <property type="entry name" value="Ntn_hydrolases_N"/>
</dbReference>
<dbReference type="InterPro" id="IPR001347">
    <property type="entry name" value="SIS_dom"/>
</dbReference>
<dbReference type="InterPro" id="IPR046348">
    <property type="entry name" value="SIS_dom_sf"/>
</dbReference>
<dbReference type="NCBIfam" id="TIGR01135">
    <property type="entry name" value="glmS"/>
    <property type="match status" value="1"/>
</dbReference>
<dbReference type="NCBIfam" id="NF001484">
    <property type="entry name" value="PRK00331.1"/>
    <property type="match status" value="1"/>
</dbReference>
<dbReference type="PANTHER" id="PTHR10937">
    <property type="entry name" value="GLUCOSAMINE--FRUCTOSE-6-PHOSPHATE AMINOTRANSFERASE, ISOMERIZING"/>
    <property type="match status" value="1"/>
</dbReference>
<dbReference type="PANTHER" id="PTHR10937:SF0">
    <property type="entry name" value="GLUTAMINE--FRUCTOSE-6-PHOSPHATE TRANSAMINASE (ISOMERIZING)"/>
    <property type="match status" value="1"/>
</dbReference>
<dbReference type="Pfam" id="PF13522">
    <property type="entry name" value="GATase_6"/>
    <property type="match status" value="1"/>
</dbReference>
<dbReference type="Pfam" id="PF01380">
    <property type="entry name" value="SIS"/>
    <property type="match status" value="2"/>
</dbReference>
<dbReference type="SUPFAM" id="SSF56235">
    <property type="entry name" value="N-terminal nucleophile aminohydrolases (Ntn hydrolases)"/>
    <property type="match status" value="1"/>
</dbReference>
<dbReference type="SUPFAM" id="SSF53697">
    <property type="entry name" value="SIS domain"/>
    <property type="match status" value="1"/>
</dbReference>
<dbReference type="PROSITE" id="PS51278">
    <property type="entry name" value="GATASE_TYPE_2"/>
    <property type="match status" value="1"/>
</dbReference>
<dbReference type="PROSITE" id="PS51464">
    <property type="entry name" value="SIS"/>
    <property type="match status" value="2"/>
</dbReference>